<comment type="function">
    <text evidence="1">Catalyzes the attachment of glutamate to tRNA(Glu) in a two-step reaction: glutamate is first activated by ATP to form Glu-AMP and then transferred to the acceptor end of tRNA(Glu).</text>
</comment>
<comment type="catalytic activity">
    <reaction evidence="1">
        <text>tRNA(Glu) + L-glutamate + ATP = L-glutamyl-tRNA(Glu) + AMP + diphosphate</text>
        <dbReference type="Rhea" id="RHEA:23540"/>
        <dbReference type="Rhea" id="RHEA-COMP:9663"/>
        <dbReference type="Rhea" id="RHEA-COMP:9680"/>
        <dbReference type="ChEBI" id="CHEBI:29985"/>
        <dbReference type="ChEBI" id="CHEBI:30616"/>
        <dbReference type="ChEBI" id="CHEBI:33019"/>
        <dbReference type="ChEBI" id="CHEBI:78442"/>
        <dbReference type="ChEBI" id="CHEBI:78520"/>
        <dbReference type="ChEBI" id="CHEBI:456215"/>
        <dbReference type="EC" id="6.1.1.17"/>
    </reaction>
</comment>
<comment type="subunit">
    <text evidence="1">Monomer.</text>
</comment>
<comment type="subcellular location">
    <subcellularLocation>
        <location evidence="1">Cytoplasm</location>
    </subcellularLocation>
</comment>
<comment type="similarity">
    <text evidence="1">Belongs to the class-I aminoacyl-tRNA synthetase family. Glutamate--tRNA ligase type 1 subfamily.</text>
</comment>
<reference key="1">
    <citation type="journal article" date="2005" name="Infect. Immun.">
        <title>Comparative genomic analysis of Chlamydia trachomatis oculotropic and genitotropic strains.</title>
        <authorList>
            <person name="Carlson J.H."/>
            <person name="Porcella S.F."/>
            <person name="McClarty G."/>
            <person name="Caldwell H.D."/>
        </authorList>
    </citation>
    <scope>NUCLEOTIDE SEQUENCE [LARGE SCALE GENOMIC DNA]</scope>
    <source>
        <strain>ATCC VR-571B / DSM 19440 / HAR-13</strain>
    </source>
</reference>
<evidence type="ECO:0000255" key="1">
    <source>
        <dbReference type="HAMAP-Rule" id="MF_00022"/>
    </source>
</evidence>
<sequence length="506" mass="58511">MTVQNVRVRVAPSPTGDPHVGTAYMALFNEVFARKYNGQMILRIEDTDQTRSRDDYEANIFSALKWCGIRWDEGPDVGGAYGPYRQSERTEIYKKYAEILLQTDCAYKCFATPQELQEMRAVASTLGYRGGYDRRYRYLSPEEVRQREEQGQPYTIRLKVPLTGESVFEDQCKGCVVFPWADVDDQVLVKSDGFPTYHFANVVDDHLMGITHVLRGEEWLSSTPKHLLLYEAFGWEPPQFFHMPLLLNPDGSKLSKRKNPTSIFYYRDAGYKKEAFMNFLTLMGYSMEGDEEIYSMQRLIEAFDPKRIGRSGAVFDIRKLDWMNKHYLNHEGSPESLLQELKGWLWNDEFLLKILPLCQSRITTLADFVGLTSFFFTAIPQYSKEELLPSSLKQEQAAVMLYSLVKYLEKKDLWEKDFFYQGSKWLAEAFQVHHKKAVIPLLYVAITGAKQGLPLFDSMELLGKARTRARLTYAQNLLGGVSKKVQQQVDKALQDQPLEDIRFLDF</sequence>
<keyword id="KW-0030">Aminoacyl-tRNA synthetase</keyword>
<keyword id="KW-0067">ATP-binding</keyword>
<keyword id="KW-0963">Cytoplasm</keyword>
<keyword id="KW-0436">Ligase</keyword>
<keyword id="KW-0547">Nucleotide-binding</keyword>
<keyword id="KW-0648">Protein biosynthesis</keyword>
<organism>
    <name type="scientific">Chlamydia trachomatis serovar A (strain ATCC VR-571B / DSM 19440 / HAR-13)</name>
    <dbReference type="NCBI Taxonomy" id="315277"/>
    <lineage>
        <taxon>Bacteria</taxon>
        <taxon>Pseudomonadati</taxon>
        <taxon>Chlamydiota</taxon>
        <taxon>Chlamydiia</taxon>
        <taxon>Chlamydiales</taxon>
        <taxon>Chlamydiaceae</taxon>
        <taxon>Chlamydia/Chlamydophila group</taxon>
        <taxon>Chlamydia</taxon>
    </lineage>
</organism>
<feature type="chain" id="PRO_0000237351" description="Glutamate--tRNA ligase">
    <location>
        <begin position="1"/>
        <end position="506"/>
    </location>
</feature>
<feature type="short sequence motif" description="'HIGH' region" evidence="1">
    <location>
        <begin position="12"/>
        <end position="22"/>
    </location>
</feature>
<feature type="short sequence motif" description="'KMSKS' region" evidence="1">
    <location>
        <begin position="253"/>
        <end position="257"/>
    </location>
</feature>
<feature type="binding site" evidence="1">
    <location>
        <position position="256"/>
    </location>
    <ligand>
        <name>ATP</name>
        <dbReference type="ChEBI" id="CHEBI:30616"/>
    </ligand>
</feature>
<proteinExistence type="inferred from homology"/>
<accession>Q3KLQ4</accession>
<gene>
    <name evidence="1" type="primary">gltX</name>
    <name type="ordered locus">CTA_0486</name>
</gene>
<name>SYE_CHLTA</name>
<dbReference type="EC" id="6.1.1.17" evidence="1"/>
<dbReference type="EMBL" id="CP000051">
    <property type="protein sequence ID" value="AAX50718.1"/>
    <property type="molecule type" value="Genomic_DNA"/>
</dbReference>
<dbReference type="RefSeq" id="WP_009871801.1">
    <property type="nucleotide sequence ID" value="NC_007429.1"/>
</dbReference>
<dbReference type="SMR" id="Q3KLQ4"/>
<dbReference type="KEGG" id="cta:CTA_0486"/>
<dbReference type="HOGENOM" id="CLU_015768_6_3_0"/>
<dbReference type="Proteomes" id="UP000002532">
    <property type="component" value="Chromosome"/>
</dbReference>
<dbReference type="GO" id="GO:0005829">
    <property type="term" value="C:cytosol"/>
    <property type="evidence" value="ECO:0007669"/>
    <property type="project" value="TreeGrafter"/>
</dbReference>
<dbReference type="GO" id="GO:0005524">
    <property type="term" value="F:ATP binding"/>
    <property type="evidence" value="ECO:0007669"/>
    <property type="project" value="UniProtKB-UniRule"/>
</dbReference>
<dbReference type="GO" id="GO:0004818">
    <property type="term" value="F:glutamate-tRNA ligase activity"/>
    <property type="evidence" value="ECO:0007669"/>
    <property type="project" value="UniProtKB-UniRule"/>
</dbReference>
<dbReference type="GO" id="GO:0000049">
    <property type="term" value="F:tRNA binding"/>
    <property type="evidence" value="ECO:0007669"/>
    <property type="project" value="InterPro"/>
</dbReference>
<dbReference type="GO" id="GO:0008270">
    <property type="term" value="F:zinc ion binding"/>
    <property type="evidence" value="ECO:0007669"/>
    <property type="project" value="InterPro"/>
</dbReference>
<dbReference type="GO" id="GO:0006424">
    <property type="term" value="P:glutamyl-tRNA aminoacylation"/>
    <property type="evidence" value="ECO:0007669"/>
    <property type="project" value="UniProtKB-UniRule"/>
</dbReference>
<dbReference type="CDD" id="cd00808">
    <property type="entry name" value="GluRS_core"/>
    <property type="match status" value="1"/>
</dbReference>
<dbReference type="FunFam" id="1.10.10.350:FF:000014">
    <property type="entry name" value="Glutamate--tRNA ligase"/>
    <property type="match status" value="1"/>
</dbReference>
<dbReference type="FunFam" id="3.40.50.620:FF:000329">
    <property type="entry name" value="Glutamate--tRNA ligase"/>
    <property type="match status" value="1"/>
</dbReference>
<dbReference type="Gene3D" id="1.10.10.350">
    <property type="match status" value="1"/>
</dbReference>
<dbReference type="Gene3D" id="3.40.50.620">
    <property type="entry name" value="HUPs"/>
    <property type="match status" value="1"/>
</dbReference>
<dbReference type="HAMAP" id="MF_00022">
    <property type="entry name" value="Glu_tRNA_synth_type1"/>
    <property type="match status" value="1"/>
</dbReference>
<dbReference type="InterPro" id="IPR045462">
    <property type="entry name" value="aa-tRNA-synth_I_cd-bd"/>
</dbReference>
<dbReference type="InterPro" id="IPR020751">
    <property type="entry name" value="aa-tRNA-synth_I_codon-bd_sub2"/>
</dbReference>
<dbReference type="InterPro" id="IPR001412">
    <property type="entry name" value="aa-tRNA-synth_I_CS"/>
</dbReference>
<dbReference type="InterPro" id="IPR008925">
    <property type="entry name" value="aa_tRNA-synth_I_cd-bd_sf"/>
</dbReference>
<dbReference type="InterPro" id="IPR004527">
    <property type="entry name" value="Glu-tRNA-ligase_bac/mito"/>
</dbReference>
<dbReference type="InterPro" id="IPR000924">
    <property type="entry name" value="Glu/Gln-tRNA-synth"/>
</dbReference>
<dbReference type="InterPro" id="IPR020058">
    <property type="entry name" value="Glu/Gln-tRNA-synth_Ib_cat-dom"/>
</dbReference>
<dbReference type="InterPro" id="IPR049940">
    <property type="entry name" value="GluQ/Sye"/>
</dbReference>
<dbReference type="InterPro" id="IPR033910">
    <property type="entry name" value="GluRS_core"/>
</dbReference>
<dbReference type="InterPro" id="IPR014729">
    <property type="entry name" value="Rossmann-like_a/b/a_fold"/>
</dbReference>
<dbReference type="NCBIfam" id="TIGR00464">
    <property type="entry name" value="gltX_bact"/>
    <property type="match status" value="1"/>
</dbReference>
<dbReference type="PANTHER" id="PTHR43311">
    <property type="entry name" value="GLUTAMATE--TRNA LIGASE"/>
    <property type="match status" value="1"/>
</dbReference>
<dbReference type="PANTHER" id="PTHR43311:SF2">
    <property type="entry name" value="GLUTAMATE--TRNA LIGASE, MITOCHONDRIAL-RELATED"/>
    <property type="match status" value="1"/>
</dbReference>
<dbReference type="Pfam" id="PF19269">
    <property type="entry name" value="Anticodon_2"/>
    <property type="match status" value="1"/>
</dbReference>
<dbReference type="Pfam" id="PF00749">
    <property type="entry name" value="tRNA-synt_1c"/>
    <property type="match status" value="1"/>
</dbReference>
<dbReference type="PRINTS" id="PR00987">
    <property type="entry name" value="TRNASYNTHGLU"/>
</dbReference>
<dbReference type="SUPFAM" id="SSF48163">
    <property type="entry name" value="An anticodon-binding domain of class I aminoacyl-tRNA synthetases"/>
    <property type="match status" value="1"/>
</dbReference>
<dbReference type="SUPFAM" id="SSF52374">
    <property type="entry name" value="Nucleotidylyl transferase"/>
    <property type="match status" value="1"/>
</dbReference>
<dbReference type="PROSITE" id="PS00178">
    <property type="entry name" value="AA_TRNA_LIGASE_I"/>
    <property type="match status" value="1"/>
</dbReference>
<protein>
    <recommendedName>
        <fullName evidence="1">Glutamate--tRNA ligase</fullName>
        <ecNumber evidence="1">6.1.1.17</ecNumber>
    </recommendedName>
    <alternativeName>
        <fullName evidence="1">Glutamyl-tRNA synthetase</fullName>
        <shortName evidence="1">GluRS</shortName>
    </alternativeName>
</protein>